<reference key="1">
    <citation type="journal article" date="2003" name="Proc. Natl. Acad. Sci. U.S.A.">
        <title>The complete genome sequence of Chromobacterium violaceum reveals remarkable and exploitable bacterial adaptability.</title>
        <authorList>
            <person name="Vasconcelos A.T.R."/>
            <person name="de Almeida D.F."/>
            <person name="Hungria M."/>
            <person name="Guimaraes C.T."/>
            <person name="Antonio R.V."/>
            <person name="Almeida F.C."/>
            <person name="de Almeida L.G.P."/>
            <person name="de Almeida R."/>
            <person name="Alves-Gomes J.A."/>
            <person name="Andrade E.M."/>
            <person name="Araripe J."/>
            <person name="de Araujo M.F.F."/>
            <person name="Astolfi-Filho S."/>
            <person name="Azevedo V."/>
            <person name="Baptista A.J."/>
            <person name="Bataus L.A.M."/>
            <person name="Batista J.S."/>
            <person name="Belo A."/>
            <person name="van den Berg C."/>
            <person name="Bogo M."/>
            <person name="Bonatto S."/>
            <person name="Bordignon J."/>
            <person name="Brigido M.M."/>
            <person name="Brito C.A."/>
            <person name="Brocchi M."/>
            <person name="Burity H.A."/>
            <person name="Camargo A.A."/>
            <person name="Cardoso D.D.P."/>
            <person name="Carneiro N.P."/>
            <person name="Carraro D.M."/>
            <person name="Carvalho C.M.B."/>
            <person name="Cascardo J.C.M."/>
            <person name="Cavada B.S."/>
            <person name="Chueire L.M.O."/>
            <person name="Creczynski-Pasa T.B."/>
            <person name="Cunha-Junior N.C."/>
            <person name="Fagundes N."/>
            <person name="Falcao C.L."/>
            <person name="Fantinatti F."/>
            <person name="Farias I.P."/>
            <person name="Felipe M.S.S."/>
            <person name="Ferrari L.P."/>
            <person name="Ferro J.A."/>
            <person name="Ferro M.I.T."/>
            <person name="Franco G.R."/>
            <person name="Freitas N.S.A."/>
            <person name="Furlan L.R."/>
            <person name="Gazzinelli R.T."/>
            <person name="Gomes E.A."/>
            <person name="Goncalves P.R."/>
            <person name="Grangeiro T.B."/>
            <person name="Grattapaglia D."/>
            <person name="Grisard E.C."/>
            <person name="Hanna E.S."/>
            <person name="Jardim S.N."/>
            <person name="Laurino J."/>
            <person name="Leoi L.C.T."/>
            <person name="Lima L.F.A."/>
            <person name="Loureiro M.F."/>
            <person name="Lyra M.C.C.P."/>
            <person name="Madeira H.M.F."/>
            <person name="Manfio G.P."/>
            <person name="Maranhao A.Q."/>
            <person name="Martins W.S."/>
            <person name="di Mauro S.M.Z."/>
            <person name="de Medeiros S.R.B."/>
            <person name="Meissner R.V."/>
            <person name="Moreira M.A.M."/>
            <person name="Nascimento F.F."/>
            <person name="Nicolas M.F."/>
            <person name="Oliveira J.G."/>
            <person name="Oliveira S.C."/>
            <person name="Paixao R.F.C."/>
            <person name="Parente J.A."/>
            <person name="Pedrosa F.O."/>
            <person name="Pena S.D.J."/>
            <person name="Pereira J.O."/>
            <person name="Pereira M."/>
            <person name="Pinto L.S.R.C."/>
            <person name="Pinto L.S."/>
            <person name="Porto J.I.R."/>
            <person name="Potrich D.P."/>
            <person name="Ramalho-Neto C.E."/>
            <person name="Reis A.M.M."/>
            <person name="Rigo L.U."/>
            <person name="Rondinelli E."/>
            <person name="Santos E.B.P."/>
            <person name="Santos F.R."/>
            <person name="Schneider M.P.C."/>
            <person name="Seuanez H.N."/>
            <person name="Silva A.M.R."/>
            <person name="da Silva A.L.C."/>
            <person name="Silva D.W."/>
            <person name="Silva R."/>
            <person name="Simoes I.C."/>
            <person name="Simon D."/>
            <person name="Soares C.M.A."/>
            <person name="Soares R.B.A."/>
            <person name="Souza E.M."/>
            <person name="Souza K.R.L."/>
            <person name="Souza R.C."/>
            <person name="Steffens M.B.R."/>
            <person name="Steindel M."/>
            <person name="Teixeira S.R."/>
            <person name="Urmenyi T."/>
            <person name="Vettore A."/>
            <person name="Wassem R."/>
            <person name="Zaha A."/>
            <person name="Simpson A.J.G."/>
        </authorList>
    </citation>
    <scope>NUCLEOTIDE SEQUENCE [LARGE SCALE GENOMIC DNA]</scope>
    <source>
        <strain>ATCC 12472 / DSM 30191 / JCM 1249 / CCUG 213 / NBRC 12614 / NCIMB 9131 / NCTC 9757 / MK</strain>
    </source>
</reference>
<comment type="function">
    <text evidence="1">Specifically catalyzes the dephosphorylation of 2-phosphoglycolate. Is involved in the dissimilation of the intracellular 2-phosphoglycolate formed during the DNA repair of 3'-phosphoglycolate ends, a major class of DNA lesions induced by oxidative stress.</text>
</comment>
<comment type="catalytic activity">
    <reaction evidence="1">
        <text>2-phosphoglycolate + H2O = glycolate + phosphate</text>
        <dbReference type="Rhea" id="RHEA:14369"/>
        <dbReference type="ChEBI" id="CHEBI:15377"/>
        <dbReference type="ChEBI" id="CHEBI:29805"/>
        <dbReference type="ChEBI" id="CHEBI:43474"/>
        <dbReference type="ChEBI" id="CHEBI:58033"/>
        <dbReference type="EC" id="3.1.3.18"/>
    </reaction>
</comment>
<comment type="cofactor">
    <cofactor evidence="1">
        <name>Mg(2+)</name>
        <dbReference type="ChEBI" id="CHEBI:18420"/>
    </cofactor>
</comment>
<comment type="pathway">
    <text evidence="1">Organic acid metabolism; glycolate biosynthesis; glycolate from 2-phosphoglycolate: step 1/1.</text>
</comment>
<comment type="similarity">
    <text evidence="1">Belongs to the HAD-like hydrolase superfamily. CbbY/CbbZ/Gph/YieH family.</text>
</comment>
<evidence type="ECO:0000255" key="1">
    <source>
        <dbReference type="HAMAP-Rule" id="MF_00495"/>
    </source>
</evidence>
<name>GPH_CHRVO</name>
<protein>
    <recommendedName>
        <fullName evidence="1">Phosphoglycolate phosphatase</fullName>
        <shortName evidence="1">PGP</shortName>
        <shortName evidence="1">PGPase</shortName>
        <ecNumber evidence="1">3.1.3.18</ecNumber>
    </recommendedName>
</protein>
<dbReference type="EC" id="3.1.3.18" evidence="1"/>
<dbReference type="EMBL" id="AE016825">
    <property type="protein sequence ID" value="AAQ59853.1"/>
    <property type="molecule type" value="Genomic_DNA"/>
</dbReference>
<dbReference type="RefSeq" id="WP_011135728.1">
    <property type="nucleotide sequence ID" value="NC_005085.1"/>
</dbReference>
<dbReference type="SMR" id="Q7NW10"/>
<dbReference type="STRING" id="243365.CV_2180"/>
<dbReference type="KEGG" id="cvi:CV_2180"/>
<dbReference type="eggNOG" id="COG0546">
    <property type="taxonomic scope" value="Bacteria"/>
</dbReference>
<dbReference type="HOGENOM" id="CLU_045011_19_1_4"/>
<dbReference type="OrthoDB" id="9776368at2"/>
<dbReference type="UniPathway" id="UPA00865">
    <property type="reaction ID" value="UER00834"/>
</dbReference>
<dbReference type="Proteomes" id="UP000001424">
    <property type="component" value="Chromosome"/>
</dbReference>
<dbReference type="GO" id="GO:0005829">
    <property type="term" value="C:cytosol"/>
    <property type="evidence" value="ECO:0007669"/>
    <property type="project" value="TreeGrafter"/>
</dbReference>
<dbReference type="GO" id="GO:0046872">
    <property type="term" value="F:metal ion binding"/>
    <property type="evidence" value="ECO:0007669"/>
    <property type="project" value="UniProtKB-KW"/>
</dbReference>
<dbReference type="GO" id="GO:0008967">
    <property type="term" value="F:phosphoglycolate phosphatase activity"/>
    <property type="evidence" value="ECO:0007669"/>
    <property type="project" value="UniProtKB-UniRule"/>
</dbReference>
<dbReference type="GO" id="GO:0005975">
    <property type="term" value="P:carbohydrate metabolic process"/>
    <property type="evidence" value="ECO:0007669"/>
    <property type="project" value="InterPro"/>
</dbReference>
<dbReference type="GO" id="GO:0006281">
    <property type="term" value="P:DNA repair"/>
    <property type="evidence" value="ECO:0007669"/>
    <property type="project" value="TreeGrafter"/>
</dbReference>
<dbReference type="GO" id="GO:0046295">
    <property type="term" value="P:glycolate biosynthetic process"/>
    <property type="evidence" value="ECO:0007669"/>
    <property type="project" value="UniProtKB-UniRule"/>
</dbReference>
<dbReference type="CDD" id="cd16417">
    <property type="entry name" value="HAD_PGPase"/>
    <property type="match status" value="1"/>
</dbReference>
<dbReference type="FunFam" id="3.40.50.1000:FF:000022">
    <property type="entry name" value="Phosphoglycolate phosphatase"/>
    <property type="match status" value="1"/>
</dbReference>
<dbReference type="Gene3D" id="3.40.50.1000">
    <property type="entry name" value="HAD superfamily/HAD-like"/>
    <property type="match status" value="1"/>
</dbReference>
<dbReference type="Gene3D" id="1.10.150.240">
    <property type="entry name" value="Putative phosphatase, domain 2"/>
    <property type="match status" value="1"/>
</dbReference>
<dbReference type="HAMAP" id="MF_00495">
    <property type="entry name" value="GPH_hydrolase_bact"/>
    <property type="match status" value="1"/>
</dbReference>
<dbReference type="InterPro" id="IPR050155">
    <property type="entry name" value="HAD-like_hydrolase_sf"/>
</dbReference>
<dbReference type="InterPro" id="IPR036412">
    <property type="entry name" value="HAD-like_sf"/>
</dbReference>
<dbReference type="InterPro" id="IPR006439">
    <property type="entry name" value="HAD-SF_hydro_IA"/>
</dbReference>
<dbReference type="InterPro" id="IPR041492">
    <property type="entry name" value="HAD_2"/>
</dbReference>
<dbReference type="InterPro" id="IPR023214">
    <property type="entry name" value="HAD_sf"/>
</dbReference>
<dbReference type="InterPro" id="IPR023198">
    <property type="entry name" value="PGP-like_dom2"/>
</dbReference>
<dbReference type="InterPro" id="IPR037512">
    <property type="entry name" value="PGPase_prok"/>
</dbReference>
<dbReference type="NCBIfam" id="TIGR01549">
    <property type="entry name" value="HAD-SF-IA-v1"/>
    <property type="match status" value="1"/>
</dbReference>
<dbReference type="NCBIfam" id="TIGR01509">
    <property type="entry name" value="HAD-SF-IA-v3"/>
    <property type="match status" value="1"/>
</dbReference>
<dbReference type="NCBIfam" id="TIGR01449">
    <property type="entry name" value="PGP_bact"/>
    <property type="match status" value="1"/>
</dbReference>
<dbReference type="NCBIfam" id="NF009695">
    <property type="entry name" value="PRK13222.1-2"/>
    <property type="match status" value="1"/>
</dbReference>
<dbReference type="PANTHER" id="PTHR43434">
    <property type="entry name" value="PHOSPHOGLYCOLATE PHOSPHATASE"/>
    <property type="match status" value="1"/>
</dbReference>
<dbReference type="PANTHER" id="PTHR43434:SF1">
    <property type="entry name" value="PHOSPHOGLYCOLATE PHOSPHATASE"/>
    <property type="match status" value="1"/>
</dbReference>
<dbReference type="Pfam" id="PF13419">
    <property type="entry name" value="HAD_2"/>
    <property type="match status" value="1"/>
</dbReference>
<dbReference type="SFLD" id="SFLDG01135">
    <property type="entry name" value="C1.5.6:_HAD__Beta-PGM__Phospha"/>
    <property type="match status" value="1"/>
</dbReference>
<dbReference type="SFLD" id="SFLDS00003">
    <property type="entry name" value="Haloacid_Dehalogenase"/>
    <property type="match status" value="1"/>
</dbReference>
<dbReference type="SUPFAM" id="SSF56784">
    <property type="entry name" value="HAD-like"/>
    <property type="match status" value="1"/>
</dbReference>
<organism>
    <name type="scientific">Chromobacterium violaceum (strain ATCC 12472 / DSM 30191 / JCM 1249 / CCUG 213 / NBRC 12614 / NCIMB 9131 / NCTC 9757 / MK)</name>
    <dbReference type="NCBI Taxonomy" id="243365"/>
    <lineage>
        <taxon>Bacteria</taxon>
        <taxon>Pseudomonadati</taxon>
        <taxon>Pseudomonadota</taxon>
        <taxon>Betaproteobacteria</taxon>
        <taxon>Neisseriales</taxon>
        <taxon>Chromobacteriaceae</taxon>
        <taxon>Chromobacterium</taxon>
    </lineage>
</organism>
<accession>Q7NW10</accession>
<gene>
    <name type="ordered locus">CV_2180</name>
</gene>
<feature type="chain" id="PRO_0000238155" description="Phosphoglycolate phosphatase">
    <location>
        <begin position="1"/>
        <end position="222"/>
    </location>
</feature>
<feature type="active site" description="Nucleophile" evidence="1">
    <location>
        <position position="12"/>
    </location>
</feature>
<feature type="binding site" evidence="1">
    <location>
        <position position="12"/>
    </location>
    <ligand>
        <name>Mg(2+)</name>
        <dbReference type="ChEBI" id="CHEBI:18420"/>
    </ligand>
</feature>
<feature type="binding site" evidence="1">
    <location>
        <position position="14"/>
    </location>
    <ligand>
        <name>Mg(2+)</name>
        <dbReference type="ChEBI" id="CHEBI:18420"/>
    </ligand>
</feature>
<feature type="binding site" evidence="1">
    <location>
        <position position="175"/>
    </location>
    <ligand>
        <name>Mg(2+)</name>
        <dbReference type="ChEBI" id="CHEBI:18420"/>
    </ligand>
</feature>
<sequence>MNLKHIKAVAFDLDGTLVDSIPDLANAANAMREHLGLPPLDPERIKSHVGDGIASLVHRAITDERHAEADGPLWERGYRFFVQRYREHLADHTTVYPGVRDGLGLLRALQLPLVMITNKSERLAVPLAEQLGLRDHFSLIVGGDTLPEKKPSALPLLHCCQVLGIQPQELAMVGDSANDVAAARAAGCAAIAVGYGYADASTLGADLTVNSIAELYDLMKNG</sequence>
<proteinExistence type="inferred from homology"/>
<keyword id="KW-0119">Carbohydrate metabolism</keyword>
<keyword id="KW-0378">Hydrolase</keyword>
<keyword id="KW-0460">Magnesium</keyword>
<keyword id="KW-0479">Metal-binding</keyword>
<keyword id="KW-1185">Reference proteome</keyword>